<feature type="chain" id="PRO_1000025331" description="Co-chaperonin GroES">
    <location>
        <begin position="1"/>
        <end position="97"/>
    </location>
</feature>
<proteinExistence type="inferred from homology"/>
<gene>
    <name evidence="1" type="primary">groES</name>
    <name evidence="1" type="synonym">groS</name>
    <name type="ordered locus">PSPPH_4078</name>
</gene>
<accession>Q48EI4</accession>
<evidence type="ECO:0000255" key="1">
    <source>
        <dbReference type="HAMAP-Rule" id="MF_00580"/>
    </source>
</evidence>
<reference key="1">
    <citation type="journal article" date="2005" name="J. Bacteriol.">
        <title>Whole-genome sequence analysis of Pseudomonas syringae pv. phaseolicola 1448A reveals divergence among pathovars in genes involved in virulence and transposition.</title>
        <authorList>
            <person name="Joardar V."/>
            <person name="Lindeberg M."/>
            <person name="Jackson R.W."/>
            <person name="Selengut J."/>
            <person name="Dodson R."/>
            <person name="Brinkac L.M."/>
            <person name="Daugherty S.C."/>
            <person name="DeBoy R.T."/>
            <person name="Durkin A.S."/>
            <person name="Gwinn Giglio M."/>
            <person name="Madupu R."/>
            <person name="Nelson W.C."/>
            <person name="Rosovitz M.J."/>
            <person name="Sullivan S.A."/>
            <person name="Crabtree J."/>
            <person name="Creasy T."/>
            <person name="Davidsen T.M."/>
            <person name="Haft D.H."/>
            <person name="Zafar N."/>
            <person name="Zhou L."/>
            <person name="Halpin R."/>
            <person name="Holley T."/>
            <person name="Khouri H.M."/>
            <person name="Feldblyum T.V."/>
            <person name="White O."/>
            <person name="Fraser C.M."/>
            <person name="Chatterjee A.K."/>
            <person name="Cartinhour S."/>
            <person name="Schneider D."/>
            <person name="Mansfield J.W."/>
            <person name="Collmer A."/>
            <person name="Buell R."/>
        </authorList>
    </citation>
    <scope>NUCLEOTIDE SEQUENCE [LARGE SCALE GENOMIC DNA]</scope>
    <source>
        <strain>1448A / Race 6</strain>
    </source>
</reference>
<sequence>MKLRPLHDRVVIRRSEEETKTAGGIVLPGSAAEKPNRGEIVAVGTGRVLDNGEVRALAVKVGDKVVFGPYSGSNTVKVDGEDLLVMSENEILAVVEG</sequence>
<protein>
    <recommendedName>
        <fullName evidence="1">Co-chaperonin GroES</fullName>
    </recommendedName>
    <alternativeName>
        <fullName evidence="1">10 kDa chaperonin</fullName>
    </alternativeName>
    <alternativeName>
        <fullName evidence="1">Chaperonin-10</fullName>
        <shortName evidence="1">Cpn10</shortName>
    </alternativeName>
</protein>
<comment type="function">
    <text evidence="1">Together with the chaperonin GroEL, plays an essential role in assisting protein folding. The GroEL-GroES system forms a nano-cage that allows encapsulation of the non-native substrate proteins and provides a physical environment optimized to promote and accelerate protein folding. GroES binds to the apical surface of the GroEL ring, thereby capping the opening of the GroEL channel.</text>
</comment>
<comment type="subunit">
    <text evidence="1">Heptamer of 7 subunits arranged in a ring. Interacts with the chaperonin GroEL.</text>
</comment>
<comment type="subcellular location">
    <subcellularLocation>
        <location evidence="1">Cytoplasm</location>
    </subcellularLocation>
</comment>
<comment type="similarity">
    <text evidence="1">Belongs to the GroES chaperonin family.</text>
</comment>
<keyword id="KW-0143">Chaperone</keyword>
<keyword id="KW-0963">Cytoplasm</keyword>
<dbReference type="EMBL" id="CP000058">
    <property type="protein sequence ID" value="AAZ34660.1"/>
    <property type="molecule type" value="Genomic_DNA"/>
</dbReference>
<dbReference type="RefSeq" id="WP_003304675.1">
    <property type="nucleotide sequence ID" value="NC_005773.3"/>
</dbReference>
<dbReference type="SMR" id="Q48EI4"/>
<dbReference type="KEGG" id="psp:PSPPH_4078"/>
<dbReference type="eggNOG" id="COG0234">
    <property type="taxonomic scope" value="Bacteria"/>
</dbReference>
<dbReference type="HOGENOM" id="CLU_132825_2_0_6"/>
<dbReference type="Proteomes" id="UP000000551">
    <property type="component" value="Chromosome"/>
</dbReference>
<dbReference type="GO" id="GO:0005737">
    <property type="term" value="C:cytoplasm"/>
    <property type="evidence" value="ECO:0007669"/>
    <property type="project" value="UniProtKB-SubCell"/>
</dbReference>
<dbReference type="GO" id="GO:0005524">
    <property type="term" value="F:ATP binding"/>
    <property type="evidence" value="ECO:0007669"/>
    <property type="project" value="InterPro"/>
</dbReference>
<dbReference type="GO" id="GO:0046872">
    <property type="term" value="F:metal ion binding"/>
    <property type="evidence" value="ECO:0007669"/>
    <property type="project" value="TreeGrafter"/>
</dbReference>
<dbReference type="GO" id="GO:0044183">
    <property type="term" value="F:protein folding chaperone"/>
    <property type="evidence" value="ECO:0007669"/>
    <property type="project" value="InterPro"/>
</dbReference>
<dbReference type="GO" id="GO:0051087">
    <property type="term" value="F:protein-folding chaperone binding"/>
    <property type="evidence" value="ECO:0007669"/>
    <property type="project" value="TreeGrafter"/>
</dbReference>
<dbReference type="GO" id="GO:0051082">
    <property type="term" value="F:unfolded protein binding"/>
    <property type="evidence" value="ECO:0007669"/>
    <property type="project" value="TreeGrafter"/>
</dbReference>
<dbReference type="GO" id="GO:0051085">
    <property type="term" value="P:chaperone cofactor-dependent protein refolding"/>
    <property type="evidence" value="ECO:0007669"/>
    <property type="project" value="TreeGrafter"/>
</dbReference>
<dbReference type="CDD" id="cd00320">
    <property type="entry name" value="cpn10"/>
    <property type="match status" value="1"/>
</dbReference>
<dbReference type="FunFam" id="2.30.33.40:FF:000001">
    <property type="entry name" value="10 kDa chaperonin"/>
    <property type="match status" value="1"/>
</dbReference>
<dbReference type="Gene3D" id="2.30.33.40">
    <property type="entry name" value="GroES chaperonin"/>
    <property type="match status" value="1"/>
</dbReference>
<dbReference type="HAMAP" id="MF_00580">
    <property type="entry name" value="CH10"/>
    <property type="match status" value="1"/>
</dbReference>
<dbReference type="InterPro" id="IPR020818">
    <property type="entry name" value="Chaperonin_GroES"/>
</dbReference>
<dbReference type="InterPro" id="IPR037124">
    <property type="entry name" value="Chaperonin_GroES_sf"/>
</dbReference>
<dbReference type="InterPro" id="IPR018369">
    <property type="entry name" value="Chaprnonin_Cpn10_CS"/>
</dbReference>
<dbReference type="InterPro" id="IPR011032">
    <property type="entry name" value="GroES-like_sf"/>
</dbReference>
<dbReference type="NCBIfam" id="NF001526">
    <property type="entry name" value="PRK00364.1-1"/>
    <property type="match status" value="1"/>
</dbReference>
<dbReference type="NCBIfam" id="NF001527">
    <property type="entry name" value="PRK00364.1-2"/>
    <property type="match status" value="1"/>
</dbReference>
<dbReference type="NCBIfam" id="NF001531">
    <property type="entry name" value="PRK00364.2-2"/>
    <property type="match status" value="1"/>
</dbReference>
<dbReference type="NCBIfam" id="NF001533">
    <property type="entry name" value="PRK00364.2-4"/>
    <property type="match status" value="1"/>
</dbReference>
<dbReference type="PANTHER" id="PTHR10772">
    <property type="entry name" value="10 KDA HEAT SHOCK PROTEIN"/>
    <property type="match status" value="1"/>
</dbReference>
<dbReference type="PANTHER" id="PTHR10772:SF58">
    <property type="entry name" value="CO-CHAPERONIN GROES"/>
    <property type="match status" value="1"/>
</dbReference>
<dbReference type="Pfam" id="PF00166">
    <property type="entry name" value="Cpn10"/>
    <property type="match status" value="1"/>
</dbReference>
<dbReference type="PRINTS" id="PR00297">
    <property type="entry name" value="CHAPERONIN10"/>
</dbReference>
<dbReference type="SMART" id="SM00883">
    <property type="entry name" value="Cpn10"/>
    <property type="match status" value="1"/>
</dbReference>
<dbReference type="SUPFAM" id="SSF50129">
    <property type="entry name" value="GroES-like"/>
    <property type="match status" value="1"/>
</dbReference>
<dbReference type="PROSITE" id="PS00681">
    <property type="entry name" value="CHAPERONINS_CPN10"/>
    <property type="match status" value="1"/>
</dbReference>
<name>CH10_PSE14</name>
<organism>
    <name type="scientific">Pseudomonas savastanoi pv. phaseolicola (strain 1448A / Race 6)</name>
    <name type="common">Pseudomonas syringae pv. phaseolicola (strain 1448A / Race 6)</name>
    <dbReference type="NCBI Taxonomy" id="264730"/>
    <lineage>
        <taxon>Bacteria</taxon>
        <taxon>Pseudomonadati</taxon>
        <taxon>Pseudomonadota</taxon>
        <taxon>Gammaproteobacteria</taxon>
        <taxon>Pseudomonadales</taxon>
        <taxon>Pseudomonadaceae</taxon>
        <taxon>Pseudomonas</taxon>
    </lineage>
</organism>